<evidence type="ECO:0000255" key="1">
    <source>
        <dbReference type="HAMAP-Rule" id="MF_01368"/>
    </source>
</evidence>
<evidence type="ECO:0000305" key="2"/>
<keyword id="KW-0687">Ribonucleoprotein</keyword>
<keyword id="KW-0689">Ribosomal protein</keyword>
<gene>
    <name evidence="1" type="primary">rplQ</name>
    <name type="ordered locus">RC0981</name>
</gene>
<name>RL17_RICCN</name>
<protein>
    <recommendedName>
        <fullName evidence="1">Large ribosomal subunit protein bL17</fullName>
    </recommendedName>
    <alternativeName>
        <fullName evidence="2">50S ribosomal protein L17</fullName>
    </alternativeName>
</protein>
<proteinExistence type="inferred from homology"/>
<sequence>MRHKIKGRKLNITSSHRQAMLANMAVALVTHEQIKTTLPKAKELRPYIETLITKAKKADLMVRRSVLSKIKDKTAVEKLINILGTRYKDRPGGYTRIIKAGFRYGDLAPIAYIEFVDRDINAKGNIQQDANEEIKN</sequence>
<organism>
    <name type="scientific">Rickettsia conorii (strain ATCC VR-613 / Malish 7)</name>
    <dbReference type="NCBI Taxonomy" id="272944"/>
    <lineage>
        <taxon>Bacteria</taxon>
        <taxon>Pseudomonadati</taxon>
        <taxon>Pseudomonadota</taxon>
        <taxon>Alphaproteobacteria</taxon>
        <taxon>Rickettsiales</taxon>
        <taxon>Rickettsiaceae</taxon>
        <taxon>Rickettsieae</taxon>
        <taxon>Rickettsia</taxon>
        <taxon>spotted fever group</taxon>
    </lineage>
</organism>
<comment type="subunit">
    <text evidence="1">Part of the 50S ribosomal subunit. Contacts protein L32.</text>
</comment>
<comment type="similarity">
    <text evidence="1">Belongs to the bacterial ribosomal protein bL17 family.</text>
</comment>
<feature type="chain" id="PRO_0000175540" description="Large ribosomal subunit protein bL17">
    <location>
        <begin position="1"/>
        <end position="136"/>
    </location>
</feature>
<dbReference type="EMBL" id="AE006914">
    <property type="protein sequence ID" value="AAL03519.1"/>
    <property type="molecule type" value="Genomic_DNA"/>
</dbReference>
<dbReference type="PIR" id="E97822">
    <property type="entry name" value="E97822"/>
</dbReference>
<dbReference type="RefSeq" id="WP_010977574.1">
    <property type="nucleotide sequence ID" value="NC_003103.1"/>
</dbReference>
<dbReference type="SMR" id="Q92GZ1"/>
<dbReference type="GeneID" id="928123"/>
<dbReference type="KEGG" id="rco:RC0981"/>
<dbReference type="PATRIC" id="fig|272944.4.peg.1121"/>
<dbReference type="HOGENOM" id="CLU_074407_2_0_5"/>
<dbReference type="Proteomes" id="UP000000816">
    <property type="component" value="Chromosome"/>
</dbReference>
<dbReference type="GO" id="GO:0022625">
    <property type="term" value="C:cytosolic large ribosomal subunit"/>
    <property type="evidence" value="ECO:0007669"/>
    <property type="project" value="TreeGrafter"/>
</dbReference>
<dbReference type="GO" id="GO:0003735">
    <property type="term" value="F:structural constituent of ribosome"/>
    <property type="evidence" value="ECO:0007669"/>
    <property type="project" value="InterPro"/>
</dbReference>
<dbReference type="GO" id="GO:0006412">
    <property type="term" value="P:translation"/>
    <property type="evidence" value="ECO:0007669"/>
    <property type="project" value="UniProtKB-UniRule"/>
</dbReference>
<dbReference type="FunFam" id="3.90.1030.10:FF:000001">
    <property type="entry name" value="50S ribosomal protein L17"/>
    <property type="match status" value="1"/>
</dbReference>
<dbReference type="Gene3D" id="3.90.1030.10">
    <property type="entry name" value="Ribosomal protein L17"/>
    <property type="match status" value="1"/>
</dbReference>
<dbReference type="HAMAP" id="MF_01368">
    <property type="entry name" value="Ribosomal_bL17"/>
    <property type="match status" value="1"/>
</dbReference>
<dbReference type="InterPro" id="IPR000456">
    <property type="entry name" value="Ribosomal_bL17"/>
</dbReference>
<dbReference type="InterPro" id="IPR047859">
    <property type="entry name" value="Ribosomal_bL17_CS"/>
</dbReference>
<dbReference type="InterPro" id="IPR036373">
    <property type="entry name" value="Ribosomal_bL17_sf"/>
</dbReference>
<dbReference type="NCBIfam" id="TIGR00059">
    <property type="entry name" value="L17"/>
    <property type="match status" value="1"/>
</dbReference>
<dbReference type="PANTHER" id="PTHR14413:SF16">
    <property type="entry name" value="LARGE RIBOSOMAL SUBUNIT PROTEIN BL17M"/>
    <property type="match status" value="1"/>
</dbReference>
<dbReference type="PANTHER" id="PTHR14413">
    <property type="entry name" value="RIBOSOMAL PROTEIN L17"/>
    <property type="match status" value="1"/>
</dbReference>
<dbReference type="Pfam" id="PF01196">
    <property type="entry name" value="Ribosomal_L17"/>
    <property type="match status" value="1"/>
</dbReference>
<dbReference type="SUPFAM" id="SSF64263">
    <property type="entry name" value="Prokaryotic ribosomal protein L17"/>
    <property type="match status" value="1"/>
</dbReference>
<dbReference type="PROSITE" id="PS01167">
    <property type="entry name" value="RIBOSOMAL_L17"/>
    <property type="match status" value="1"/>
</dbReference>
<accession>Q92GZ1</accession>
<reference key="1">
    <citation type="journal article" date="2001" name="Science">
        <title>Mechanisms of evolution in Rickettsia conorii and R. prowazekii.</title>
        <authorList>
            <person name="Ogata H."/>
            <person name="Audic S."/>
            <person name="Renesto-Audiffren P."/>
            <person name="Fournier P.-E."/>
            <person name="Barbe V."/>
            <person name="Samson D."/>
            <person name="Roux V."/>
            <person name="Cossart P."/>
            <person name="Weissenbach J."/>
            <person name="Claverie J.-M."/>
            <person name="Raoult D."/>
        </authorList>
    </citation>
    <scope>NUCLEOTIDE SEQUENCE [LARGE SCALE GENOMIC DNA]</scope>
    <source>
        <strain>ATCC VR-613 / Malish 7</strain>
    </source>
</reference>